<dbReference type="EC" id="4.1.1.50" evidence="1"/>
<dbReference type="EMBL" id="CP000886">
    <property type="protein sequence ID" value="ABX65646.1"/>
    <property type="molecule type" value="Genomic_DNA"/>
</dbReference>
<dbReference type="RefSeq" id="WP_000734276.1">
    <property type="nucleotide sequence ID" value="NC_010102.1"/>
</dbReference>
<dbReference type="KEGG" id="spq:SPAB_00204"/>
<dbReference type="PATRIC" id="fig|1016998.12.peg.197"/>
<dbReference type="HOGENOM" id="CLU_092007_0_0_6"/>
<dbReference type="BioCyc" id="SENT1016998:SPAB_RS00825-MONOMER"/>
<dbReference type="UniPathway" id="UPA00331">
    <property type="reaction ID" value="UER00451"/>
</dbReference>
<dbReference type="Proteomes" id="UP000008556">
    <property type="component" value="Chromosome"/>
</dbReference>
<dbReference type="GO" id="GO:0005829">
    <property type="term" value="C:cytosol"/>
    <property type="evidence" value="ECO:0007669"/>
    <property type="project" value="TreeGrafter"/>
</dbReference>
<dbReference type="GO" id="GO:0004014">
    <property type="term" value="F:adenosylmethionine decarboxylase activity"/>
    <property type="evidence" value="ECO:0007669"/>
    <property type="project" value="UniProtKB-UniRule"/>
</dbReference>
<dbReference type="GO" id="GO:0008295">
    <property type="term" value="P:spermidine biosynthetic process"/>
    <property type="evidence" value="ECO:0007669"/>
    <property type="project" value="UniProtKB-UniRule"/>
</dbReference>
<dbReference type="FunFam" id="3.60.90.10:FF:000001">
    <property type="entry name" value="S-adenosylmethionine decarboxylase proenzyme"/>
    <property type="match status" value="1"/>
</dbReference>
<dbReference type="Gene3D" id="3.60.90.10">
    <property type="entry name" value="S-adenosylmethionine decarboxylase"/>
    <property type="match status" value="1"/>
</dbReference>
<dbReference type="HAMAP" id="MF_00465">
    <property type="entry name" value="AdoMetDC_2"/>
    <property type="match status" value="1"/>
</dbReference>
<dbReference type="InterPro" id="IPR003826">
    <property type="entry name" value="AdoMetDC_fam_prok"/>
</dbReference>
<dbReference type="InterPro" id="IPR009165">
    <property type="entry name" value="S-AdoMet_deCO2ase_bac"/>
</dbReference>
<dbReference type="InterPro" id="IPR016067">
    <property type="entry name" value="S-AdoMet_deCO2ase_core"/>
</dbReference>
<dbReference type="NCBIfam" id="TIGR03331">
    <property type="entry name" value="SAM_DCase_Eco"/>
    <property type="match status" value="1"/>
</dbReference>
<dbReference type="PANTHER" id="PTHR33866">
    <property type="entry name" value="S-ADENOSYLMETHIONINE DECARBOXYLASE PROENZYME"/>
    <property type="match status" value="1"/>
</dbReference>
<dbReference type="PANTHER" id="PTHR33866:SF1">
    <property type="entry name" value="S-ADENOSYLMETHIONINE DECARBOXYLASE PROENZYME"/>
    <property type="match status" value="1"/>
</dbReference>
<dbReference type="Pfam" id="PF02675">
    <property type="entry name" value="AdoMet_dc"/>
    <property type="match status" value="1"/>
</dbReference>
<dbReference type="PIRSF" id="PIRSF001356">
    <property type="entry name" value="SAM_decarboxylas"/>
    <property type="match status" value="1"/>
</dbReference>
<dbReference type="SUPFAM" id="SSF56276">
    <property type="entry name" value="S-adenosylmethionine decarboxylase"/>
    <property type="match status" value="1"/>
</dbReference>
<evidence type="ECO:0000255" key="1">
    <source>
        <dbReference type="HAMAP-Rule" id="MF_00465"/>
    </source>
</evidence>
<name>SPED_SALPB</name>
<keyword id="KW-0068">Autocatalytic cleavage</keyword>
<keyword id="KW-0210">Decarboxylase</keyword>
<keyword id="KW-0456">Lyase</keyword>
<keyword id="KW-0620">Polyamine biosynthesis</keyword>
<keyword id="KW-0670">Pyruvate</keyword>
<keyword id="KW-0949">S-adenosyl-L-methionine</keyword>
<keyword id="KW-0704">Schiff base</keyword>
<keyword id="KW-0745">Spermidine biosynthesis</keyword>
<keyword id="KW-0865">Zymogen</keyword>
<gene>
    <name evidence="1" type="primary">speD</name>
    <name type="ordered locus">SPAB_00204</name>
</gene>
<sequence length="264" mass="30415">MKKLKLHGFNNLTKSLSFCIYDICYAKTAEERDGYIAYIDELYNANRLTEILSETCSIIGANILNIARQDYEPQGASVTILVSEEPIDPKLIDQTEHPGPLPETVVAHLDKSHICVHTYPESHPEGGLCTFRADIEVSTCGVISPLKALNYLIHQLESDIVTIDYRVRGFTRDVNGMKHFIDHEINSIQNFMSEDMKSLYDMVDVNVYQENIFHTKMLLKEFDLKHYMFHTKPEDLTETERQEITAALWKEMREIYYGRNISAV</sequence>
<proteinExistence type="inferred from homology"/>
<feature type="chain" id="PRO_1000081178" description="S-adenosylmethionine decarboxylase beta chain" evidence="1">
    <location>
        <begin position="1"/>
        <end position="111"/>
    </location>
</feature>
<feature type="chain" id="PRO_1000081179" description="S-adenosylmethionine decarboxylase alpha chain" evidence="1">
    <location>
        <begin position="112"/>
        <end position="264"/>
    </location>
</feature>
<feature type="active site" description="Schiff-base intermediate with substrate; via pyruvic acid" evidence="1">
    <location>
        <position position="112"/>
    </location>
</feature>
<feature type="active site" description="Proton acceptor; for processing activity" evidence="1">
    <location>
        <position position="117"/>
    </location>
</feature>
<feature type="active site" description="Proton donor; for catalytic activity" evidence="1">
    <location>
        <position position="140"/>
    </location>
</feature>
<feature type="site" description="Cleavage (non-hydrolytic); by autolysis" evidence="1">
    <location>
        <begin position="111"/>
        <end position="112"/>
    </location>
</feature>
<feature type="modified residue" description="Pyruvic acid (Ser); by autocatalysis" evidence="1">
    <location>
        <position position="112"/>
    </location>
</feature>
<comment type="function">
    <text evidence="1">Catalyzes the decarboxylation of S-adenosylmethionine to S-adenosylmethioninamine (dcAdoMet), the propylamine donor required for the synthesis of the polyamines spermine and spermidine from the diamine putrescine.</text>
</comment>
<comment type="catalytic activity">
    <reaction evidence="1">
        <text>S-adenosyl-L-methionine + H(+) = S-adenosyl 3-(methylsulfanyl)propylamine + CO2</text>
        <dbReference type="Rhea" id="RHEA:15981"/>
        <dbReference type="ChEBI" id="CHEBI:15378"/>
        <dbReference type="ChEBI" id="CHEBI:16526"/>
        <dbReference type="ChEBI" id="CHEBI:57443"/>
        <dbReference type="ChEBI" id="CHEBI:59789"/>
        <dbReference type="EC" id="4.1.1.50"/>
    </reaction>
</comment>
<comment type="cofactor">
    <cofactor evidence="1">
        <name>pyruvate</name>
        <dbReference type="ChEBI" id="CHEBI:15361"/>
    </cofactor>
    <text evidence="1">Binds 1 pyruvoyl group covalently per subunit.</text>
</comment>
<comment type="pathway">
    <text evidence="1">Amine and polyamine biosynthesis; S-adenosylmethioninamine biosynthesis; S-adenosylmethioninamine from S-adenosyl-L-methionine: step 1/1.</text>
</comment>
<comment type="subunit">
    <text evidence="1">Heterooctamer of four alpha and four beta chains arranged as a tetramer of alpha/beta heterodimers.</text>
</comment>
<comment type="PTM">
    <text evidence="1">Is synthesized initially as an inactive proenzyme. Formation of the active enzyme involves a self-maturation process in which the active site pyruvoyl group is generated from an internal serine residue via an autocatalytic post-translational modification. Two non-identical subunits are generated from the proenzyme in this reaction, and the pyruvate is formed at the N-terminus of the alpha chain, which is derived from the carboxyl end of the proenzyme. The post-translation cleavage follows an unusual pathway, termed non-hydrolytic serinolysis, in which the side chain hydroxyl group of the serine supplies its oxygen atom to form the C-terminus of the beta chain, while the remainder of the serine residue undergoes an oxidative deamination to produce ammonia and the pyruvoyl group blocking the N-terminus of the alpha chain.</text>
</comment>
<comment type="similarity">
    <text evidence="1">Belongs to the prokaryotic AdoMetDC family. Type 2 subfamily.</text>
</comment>
<reference key="1">
    <citation type="submission" date="2007-11" db="EMBL/GenBank/DDBJ databases">
        <authorList>
            <consortium name="The Salmonella enterica serovar Paratyphi B Genome Sequencing Project"/>
            <person name="McClelland M."/>
            <person name="Sanderson E.K."/>
            <person name="Porwollik S."/>
            <person name="Spieth J."/>
            <person name="Clifton W.S."/>
            <person name="Fulton R."/>
            <person name="Cordes M."/>
            <person name="Wollam A."/>
            <person name="Shah N."/>
            <person name="Pepin K."/>
            <person name="Bhonagiri V."/>
            <person name="Nash W."/>
            <person name="Johnson M."/>
            <person name="Thiruvilangam P."/>
            <person name="Wilson R."/>
        </authorList>
    </citation>
    <scope>NUCLEOTIDE SEQUENCE [LARGE SCALE GENOMIC DNA]</scope>
    <source>
        <strain>ATCC BAA-1250 / SPB7</strain>
    </source>
</reference>
<protein>
    <recommendedName>
        <fullName evidence="1">S-adenosylmethionine decarboxylase proenzyme</fullName>
        <shortName evidence="1">AdoMetDC</shortName>
        <shortName evidence="1">SAMDC</shortName>
        <ecNumber evidence="1">4.1.1.50</ecNumber>
    </recommendedName>
    <component>
        <recommendedName>
            <fullName evidence="1">S-adenosylmethionine decarboxylase beta chain</fullName>
        </recommendedName>
    </component>
    <component>
        <recommendedName>
            <fullName evidence="1">S-adenosylmethionine decarboxylase alpha chain</fullName>
        </recommendedName>
    </component>
</protein>
<accession>A9MZR1</accession>
<organism>
    <name type="scientific">Salmonella paratyphi B (strain ATCC BAA-1250 / SPB7)</name>
    <dbReference type="NCBI Taxonomy" id="1016998"/>
    <lineage>
        <taxon>Bacteria</taxon>
        <taxon>Pseudomonadati</taxon>
        <taxon>Pseudomonadota</taxon>
        <taxon>Gammaproteobacteria</taxon>
        <taxon>Enterobacterales</taxon>
        <taxon>Enterobacteriaceae</taxon>
        <taxon>Salmonella</taxon>
    </lineage>
</organism>